<gene>
    <name type="ordered locus">At3g51320</name>
    <name type="ORF">F24M12.360</name>
</gene>
<keyword id="KW-1185">Reference proteome</keyword>
<keyword id="KW-0677">Repeat</keyword>
<accession>Q0WVU0</accession>
<accession>Q9SD17</accession>
<feature type="chain" id="PRO_0000356137" description="Pentatricopeptide repeat-containing protein At3g51320">
    <location>
        <begin position="1"/>
        <end position="530"/>
    </location>
</feature>
<feature type="repeat" description="PPR 1">
    <location>
        <begin position="82"/>
        <end position="116"/>
    </location>
</feature>
<feature type="repeat" description="PPR 2">
    <location>
        <begin position="117"/>
        <end position="151"/>
    </location>
</feature>
<feature type="repeat" description="PPR 3">
    <location>
        <begin position="152"/>
        <end position="182"/>
    </location>
</feature>
<feature type="repeat" description="PPR 4">
    <location>
        <begin position="183"/>
        <end position="217"/>
    </location>
</feature>
<feature type="repeat" description="PPR 5">
    <location>
        <begin position="218"/>
        <end position="248"/>
    </location>
</feature>
<feature type="repeat" description="PPR 6">
    <location>
        <begin position="249"/>
        <end position="283"/>
    </location>
</feature>
<feature type="repeat" description="PPR 7">
    <location>
        <begin position="284"/>
        <end position="314"/>
    </location>
</feature>
<feature type="repeat" description="PPR 8">
    <location>
        <begin position="315"/>
        <end position="349"/>
    </location>
</feature>
<feature type="repeat" description="PPR 9">
    <location>
        <begin position="350"/>
        <end position="380"/>
    </location>
</feature>
<feature type="repeat" description="PPR 10">
    <location>
        <begin position="386"/>
        <end position="420"/>
    </location>
</feature>
<feature type="region of interest" description="Type E motif">
    <location>
        <begin position="424"/>
        <end position="499"/>
    </location>
</feature>
<sequence length="530" mass="58985">MAKASSIRQFVTSRFIVPGTGLLKGFKLVEDSNSITHLFQVHARLITSGNFWDSSWAIRLLKSSSRFGDSSYTVSIYRSIGKLYCANPVFKAYLVSSSPKQALGFYFDILRFGFVPDSYTFVSLISCIEKTCCVDSGKMCHGQAIKHGCDQVLPVQNSLMHMYTCCGALDLAKKLFVEIPKRDIVSWNSIIAGMVRNGDVLAAHKLFDEMPDKNIISWNIMISAYLGANNPGVSISLFREMVRAGFQGNESTLVLLLNACGRSARLKEGRSVHASLIRTFLNSSVVIDTALIDMYGKCKEVGLARRIFDSLSIRNKVTWNVMILAHCLHGRPEGGLELFEAMINGMLRPDEVTFVGVLCGCARAGLVSQGQSYYSLMVDEFQIKPNFGHQWCMANLYSSAGFPEEAEEALKNLPDEDVTPESTKWANLLSSSRFTGNPTLGESIAKSLIETDPLNYKYYHLLMNIYSVTGRWEDVNRVREMVKERKIGRIPGCGLVDLKEIVHGLRLGCKEAEKVFTETSLEKCYSDSPS</sequence>
<evidence type="ECO:0000305" key="1"/>
<reference key="1">
    <citation type="journal article" date="2000" name="Nature">
        <title>Sequence and analysis of chromosome 3 of the plant Arabidopsis thaliana.</title>
        <authorList>
            <person name="Salanoubat M."/>
            <person name="Lemcke K."/>
            <person name="Rieger M."/>
            <person name="Ansorge W."/>
            <person name="Unseld M."/>
            <person name="Fartmann B."/>
            <person name="Valle G."/>
            <person name="Bloecker H."/>
            <person name="Perez-Alonso M."/>
            <person name="Obermaier B."/>
            <person name="Delseny M."/>
            <person name="Boutry M."/>
            <person name="Grivell L.A."/>
            <person name="Mache R."/>
            <person name="Puigdomenech P."/>
            <person name="De Simone V."/>
            <person name="Choisne N."/>
            <person name="Artiguenave F."/>
            <person name="Robert C."/>
            <person name="Brottier P."/>
            <person name="Wincker P."/>
            <person name="Cattolico L."/>
            <person name="Weissenbach J."/>
            <person name="Saurin W."/>
            <person name="Quetier F."/>
            <person name="Schaefer M."/>
            <person name="Mueller-Auer S."/>
            <person name="Gabel C."/>
            <person name="Fuchs M."/>
            <person name="Benes V."/>
            <person name="Wurmbach E."/>
            <person name="Drzonek H."/>
            <person name="Erfle H."/>
            <person name="Jordan N."/>
            <person name="Bangert S."/>
            <person name="Wiedelmann R."/>
            <person name="Kranz H."/>
            <person name="Voss H."/>
            <person name="Holland R."/>
            <person name="Brandt P."/>
            <person name="Nyakatura G."/>
            <person name="Vezzi A."/>
            <person name="D'Angelo M."/>
            <person name="Pallavicini A."/>
            <person name="Toppo S."/>
            <person name="Simionati B."/>
            <person name="Conrad A."/>
            <person name="Hornischer K."/>
            <person name="Kauer G."/>
            <person name="Loehnert T.-H."/>
            <person name="Nordsiek G."/>
            <person name="Reichelt J."/>
            <person name="Scharfe M."/>
            <person name="Schoen O."/>
            <person name="Bargues M."/>
            <person name="Terol J."/>
            <person name="Climent J."/>
            <person name="Navarro P."/>
            <person name="Collado C."/>
            <person name="Perez-Perez A."/>
            <person name="Ottenwaelder B."/>
            <person name="Duchemin D."/>
            <person name="Cooke R."/>
            <person name="Laudie M."/>
            <person name="Berger-Llauro C."/>
            <person name="Purnelle B."/>
            <person name="Masuy D."/>
            <person name="de Haan M."/>
            <person name="Maarse A.C."/>
            <person name="Alcaraz J.-P."/>
            <person name="Cottet A."/>
            <person name="Casacuberta E."/>
            <person name="Monfort A."/>
            <person name="Argiriou A."/>
            <person name="Flores M."/>
            <person name="Liguori R."/>
            <person name="Vitale D."/>
            <person name="Mannhaupt G."/>
            <person name="Haase D."/>
            <person name="Schoof H."/>
            <person name="Rudd S."/>
            <person name="Zaccaria P."/>
            <person name="Mewes H.-W."/>
            <person name="Mayer K.F.X."/>
            <person name="Kaul S."/>
            <person name="Town C.D."/>
            <person name="Koo H.L."/>
            <person name="Tallon L.J."/>
            <person name="Jenkins J."/>
            <person name="Rooney T."/>
            <person name="Rizzo M."/>
            <person name="Walts A."/>
            <person name="Utterback T."/>
            <person name="Fujii C.Y."/>
            <person name="Shea T.P."/>
            <person name="Creasy T.H."/>
            <person name="Haas B."/>
            <person name="Maiti R."/>
            <person name="Wu D."/>
            <person name="Peterson J."/>
            <person name="Van Aken S."/>
            <person name="Pai G."/>
            <person name="Militscher J."/>
            <person name="Sellers P."/>
            <person name="Gill J.E."/>
            <person name="Feldblyum T.V."/>
            <person name="Preuss D."/>
            <person name="Lin X."/>
            <person name="Nierman W.C."/>
            <person name="Salzberg S.L."/>
            <person name="White O."/>
            <person name="Venter J.C."/>
            <person name="Fraser C.M."/>
            <person name="Kaneko T."/>
            <person name="Nakamura Y."/>
            <person name="Sato S."/>
            <person name="Kato T."/>
            <person name="Asamizu E."/>
            <person name="Sasamoto S."/>
            <person name="Kimura T."/>
            <person name="Idesawa K."/>
            <person name="Kawashima K."/>
            <person name="Kishida Y."/>
            <person name="Kiyokawa C."/>
            <person name="Kohara M."/>
            <person name="Matsumoto M."/>
            <person name="Matsuno A."/>
            <person name="Muraki A."/>
            <person name="Nakayama S."/>
            <person name="Nakazaki N."/>
            <person name="Shinpo S."/>
            <person name="Takeuchi C."/>
            <person name="Wada T."/>
            <person name="Watanabe A."/>
            <person name="Yamada M."/>
            <person name="Yasuda M."/>
            <person name="Tabata S."/>
        </authorList>
    </citation>
    <scope>NUCLEOTIDE SEQUENCE [LARGE SCALE GENOMIC DNA]</scope>
    <source>
        <strain>cv. Columbia</strain>
    </source>
</reference>
<reference key="2">
    <citation type="journal article" date="2017" name="Plant J.">
        <title>Araport11: a complete reannotation of the Arabidopsis thaliana reference genome.</title>
        <authorList>
            <person name="Cheng C.Y."/>
            <person name="Krishnakumar V."/>
            <person name="Chan A.P."/>
            <person name="Thibaud-Nissen F."/>
            <person name="Schobel S."/>
            <person name="Town C.D."/>
        </authorList>
    </citation>
    <scope>GENOME REANNOTATION</scope>
    <source>
        <strain>cv. Columbia</strain>
    </source>
</reference>
<reference key="3">
    <citation type="submission" date="2006-07" db="EMBL/GenBank/DDBJ databases">
        <title>Large-scale analysis of RIKEN Arabidopsis full-length (RAFL) cDNAs.</title>
        <authorList>
            <person name="Totoki Y."/>
            <person name="Seki M."/>
            <person name="Ishida J."/>
            <person name="Nakajima M."/>
            <person name="Enju A."/>
            <person name="Kamiya A."/>
            <person name="Narusaka M."/>
            <person name="Shin-i T."/>
            <person name="Nakagawa M."/>
            <person name="Sakamoto N."/>
            <person name="Oishi K."/>
            <person name="Kohara Y."/>
            <person name="Kobayashi M."/>
            <person name="Toyoda A."/>
            <person name="Sakaki Y."/>
            <person name="Sakurai T."/>
            <person name="Iida K."/>
            <person name="Akiyama K."/>
            <person name="Satou M."/>
            <person name="Toyoda T."/>
            <person name="Konagaya A."/>
            <person name="Carninci P."/>
            <person name="Kawai J."/>
            <person name="Hayashizaki Y."/>
            <person name="Shinozaki K."/>
        </authorList>
    </citation>
    <scope>NUCLEOTIDE SEQUENCE [LARGE SCALE MRNA]</scope>
    <source>
        <strain>cv. Columbia</strain>
    </source>
</reference>
<reference key="4">
    <citation type="journal article" date="2004" name="Plant Cell">
        <title>Genome-wide analysis of Arabidopsis pentatricopeptide repeat proteins reveals their essential role in organelle biogenesis.</title>
        <authorList>
            <person name="Lurin C."/>
            <person name="Andres C."/>
            <person name="Aubourg S."/>
            <person name="Bellaoui M."/>
            <person name="Bitton F."/>
            <person name="Bruyere C."/>
            <person name="Caboche M."/>
            <person name="Debast C."/>
            <person name="Gualberto J."/>
            <person name="Hoffmann B."/>
            <person name="Lecharny A."/>
            <person name="Le Ret M."/>
            <person name="Martin-Magniette M.-L."/>
            <person name="Mireau H."/>
            <person name="Peeters N."/>
            <person name="Renou J.-P."/>
            <person name="Szurek B."/>
            <person name="Taconnat L."/>
            <person name="Small I."/>
        </authorList>
    </citation>
    <scope>GENE FAMILY</scope>
</reference>
<name>PP278_ARATH</name>
<organism>
    <name type="scientific">Arabidopsis thaliana</name>
    <name type="common">Mouse-ear cress</name>
    <dbReference type="NCBI Taxonomy" id="3702"/>
    <lineage>
        <taxon>Eukaryota</taxon>
        <taxon>Viridiplantae</taxon>
        <taxon>Streptophyta</taxon>
        <taxon>Embryophyta</taxon>
        <taxon>Tracheophyta</taxon>
        <taxon>Spermatophyta</taxon>
        <taxon>Magnoliopsida</taxon>
        <taxon>eudicotyledons</taxon>
        <taxon>Gunneridae</taxon>
        <taxon>Pentapetalae</taxon>
        <taxon>rosids</taxon>
        <taxon>malvids</taxon>
        <taxon>Brassicales</taxon>
        <taxon>Brassicaceae</taxon>
        <taxon>Camelineae</taxon>
        <taxon>Arabidopsis</taxon>
    </lineage>
</organism>
<proteinExistence type="evidence at transcript level"/>
<protein>
    <recommendedName>
        <fullName>Pentatricopeptide repeat-containing protein At3g51320</fullName>
    </recommendedName>
</protein>
<dbReference type="EMBL" id="AL132980">
    <property type="protein sequence ID" value="CAB62654.1"/>
    <property type="status" value="ALT_SEQ"/>
    <property type="molecule type" value="Genomic_DNA"/>
</dbReference>
<dbReference type="EMBL" id="CP002686">
    <property type="protein sequence ID" value="AEE78778.1"/>
    <property type="molecule type" value="Genomic_DNA"/>
</dbReference>
<dbReference type="EMBL" id="AK226647">
    <property type="protein sequence ID" value="BAE98758.1"/>
    <property type="molecule type" value="mRNA"/>
</dbReference>
<dbReference type="PIR" id="T45763">
    <property type="entry name" value="T45763"/>
</dbReference>
<dbReference type="RefSeq" id="NP_190700.2">
    <property type="nucleotide sequence ID" value="NM_114991.3"/>
</dbReference>
<dbReference type="SMR" id="Q0WVU0"/>
<dbReference type="FunCoup" id="Q0WVU0">
    <property type="interactions" value="880"/>
</dbReference>
<dbReference type="PaxDb" id="3702-AT3G51320.1"/>
<dbReference type="ProteomicsDB" id="248959"/>
<dbReference type="EnsemblPlants" id="AT3G51320.1">
    <property type="protein sequence ID" value="AT3G51320.1"/>
    <property type="gene ID" value="AT3G51320"/>
</dbReference>
<dbReference type="GeneID" id="824295"/>
<dbReference type="Gramene" id="AT3G51320.1">
    <property type="protein sequence ID" value="AT3G51320.1"/>
    <property type="gene ID" value="AT3G51320"/>
</dbReference>
<dbReference type="KEGG" id="ath:AT3G51320"/>
<dbReference type="Araport" id="AT3G51320"/>
<dbReference type="TAIR" id="AT3G51320"/>
<dbReference type="eggNOG" id="KOG4197">
    <property type="taxonomic scope" value="Eukaryota"/>
</dbReference>
<dbReference type="HOGENOM" id="CLU_002706_37_2_1"/>
<dbReference type="InParanoid" id="Q0WVU0"/>
<dbReference type="OMA" id="VMILAHC"/>
<dbReference type="PhylomeDB" id="Q0WVU0"/>
<dbReference type="PRO" id="PR:Q0WVU0"/>
<dbReference type="Proteomes" id="UP000006548">
    <property type="component" value="Chromosome 3"/>
</dbReference>
<dbReference type="ExpressionAtlas" id="Q0WVU0">
    <property type="expression patterns" value="baseline and differential"/>
</dbReference>
<dbReference type="GO" id="GO:0003723">
    <property type="term" value="F:RNA binding"/>
    <property type="evidence" value="ECO:0007669"/>
    <property type="project" value="InterPro"/>
</dbReference>
<dbReference type="GO" id="GO:0009451">
    <property type="term" value="P:RNA modification"/>
    <property type="evidence" value="ECO:0007669"/>
    <property type="project" value="InterPro"/>
</dbReference>
<dbReference type="FunFam" id="1.25.40.10:FF:001237">
    <property type="entry name" value="Pentatricopeptide repeat-containing protein"/>
    <property type="match status" value="1"/>
</dbReference>
<dbReference type="FunFam" id="1.25.40.10:FF:001575">
    <property type="entry name" value="Pentatricopeptide repeat-containing protein At3g51320"/>
    <property type="match status" value="1"/>
</dbReference>
<dbReference type="Gene3D" id="1.25.40.10">
    <property type="entry name" value="Tetratricopeptide repeat domain"/>
    <property type="match status" value="3"/>
</dbReference>
<dbReference type="InterPro" id="IPR046848">
    <property type="entry name" value="E_motif"/>
</dbReference>
<dbReference type="InterPro" id="IPR002885">
    <property type="entry name" value="Pentatricopeptide_rpt"/>
</dbReference>
<dbReference type="InterPro" id="IPR046960">
    <property type="entry name" value="PPR_At4g14850-like_plant"/>
</dbReference>
<dbReference type="InterPro" id="IPR011990">
    <property type="entry name" value="TPR-like_helical_dom_sf"/>
</dbReference>
<dbReference type="NCBIfam" id="TIGR00756">
    <property type="entry name" value="PPR"/>
    <property type="match status" value="3"/>
</dbReference>
<dbReference type="PANTHER" id="PTHR47926:SF365">
    <property type="entry name" value="DYW DOMAIN-CONTAINING PROTEIN"/>
    <property type="match status" value="1"/>
</dbReference>
<dbReference type="PANTHER" id="PTHR47926">
    <property type="entry name" value="PENTATRICOPEPTIDE REPEAT-CONTAINING PROTEIN"/>
    <property type="match status" value="1"/>
</dbReference>
<dbReference type="Pfam" id="PF20431">
    <property type="entry name" value="E_motif"/>
    <property type="match status" value="1"/>
</dbReference>
<dbReference type="Pfam" id="PF01535">
    <property type="entry name" value="PPR"/>
    <property type="match status" value="1"/>
</dbReference>
<dbReference type="Pfam" id="PF13041">
    <property type="entry name" value="PPR_2"/>
    <property type="match status" value="2"/>
</dbReference>
<dbReference type="PROSITE" id="PS51375">
    <property type="entry name" value="PPR"/>
    <property type="match status" value="11"/>
</dbReference>
<comment type="similarity">
    <text evidence="1">Belongs to the PPR family. PCMP-E subfamily.</text>
</comment>
<comment type="sequence caution" evidence="1">
    <conflict type="erroneous gene model prediction">
        <sequence resource="EMBL-CDS" id="CAB62654"/>
    </conflict>
</comment>
<comment type="online information" name="Pentatricopeptide repeat proteins">
    <link uri="https://ppr.plantenergy.uwa.edu.au"/>
</comment>